<protein>
    <recommendedName>
        <fullName>Gene 88 protein</fullName>
    </recommendedName>
    <alternativeName>
        <fullName>Gp88</fullName>
    </alternativeName>
</protein>
<organismHost>
    <name type="scientific">Mycobacterium</name>
    <dbReference type="NCBI Taxonomy" id="1763"/>
</organismHost>
<gene>
    <name type="primary">88</name>
</gene>
<accession>Q05305</accession>
<keyword id="KW-1185">Reference proteome</keyword>
<proteinExistence type="predicted"/>
<feature type="chain" id="PRO_0000164835" description="Gene 88 protein">
    <location>
        <begin position="1"/>
        <end position="239"/>
    </location>
</feature>
<dbReference type="EMBL" id="Z18946">
    <property type="protein sequence ID" value="CAA79464.1"/>
    <property type="molecule type" value="Genomic_DNA"/>
</dbReference>
<dbReference type="PIR" id="S31033">
    <property type="entry name" value="S31033"/>
</dbReference>
<dbReference type="RefSeq" id="NP_039752.1">
    <property type="nucleotide sequence ID" value="NC_001335.1"/>
</dbReference>
<dbReference type="GeneID" id="2942923"/>
<dbReference type="KEGG" id="vg:2942923"/>
<dbReference type="OrthoDB" id="6686at10239"/>
<dbReference type="Proteomes" id="UP000002123">
    <property type="component" value="Genome"/>
</dbReference>
<dbReference type="InterPro" id="IPR020290">
    <property type="entry name" value="Gp88"/>
</dbReference>
<dbReference type="Pfam" id="PF17338">
    <property type="entry name" value="GP88"/>
    <property type="match status" value="1"/>
</dbReference>
<name>VG88_BPML5</name>
<sequence>MAKLKRSNDRKVTNYVHVTKGGNATVGIANSIGLPSGQGFSCPDATAFCAKVCYAGKLEKVRKAVSSVLLHNWELLRDADLTDTVTLLSEMVAEFVKDCDRRKAPKLFRIHWDGDFFSPTYVAAWGRVIRDNPDVQFWAYTRVQTAAVYLHSQRLDNLALYFSADPDNIDVARFLEDKGINIAYVDTTFAKGKAEFPTAVRCPENNKAIDLINDKGSACARCGLCVNGRRNVLFSTTKK</sequence>
<reference key="1">
    <citation type="journal article" date="1993" name="Mol. Microbiol.">
        <title>DNA sequence, structure and gene expression of mycobacteriophage L5: a phage system for mycobacterial genetics.</title>
        <authorList>
            <person name="Hatfull G.F."/>
            <person name="Sarkis G.J."/>
        </authorList>
    </citation>
    <scope>NUCLEOTIDE SEQUENCE [LARGE SCALE GENOMIC DNA]</scope>
</reference>
<organism>
    <name type="scientific">Mycobacterium phage L5</name>
    <name type="common">Mycobacteriophage L5</name>
    <dbReference type="NCBI Taxonomy" id="31757"/>
    <lineage>
        <taxon>Viruses</taxon>
        <taxon>Duplodnaviria</taxon>
        <taxon>Heunggongvirae</taxon>
        <taxon>Uroviricota</taxon>
        <taxon>Caudoviricetes</taxon>
        <taxon>Fromanvirus</taxon>
    </lineage>
</organism>